<name>DIM_PEA</name>
<gene>
    <name type="primary">DIM</name>
    <name type="synonym">LKB</name>
</gene>
<comment type="function">
    <text evidence="5 6">Plays a critical role in the general process of plant cell elongation.</text>
</comment>
<comment type="catalytic activity">
    <reaction evidence="5">
        <text>lathosterol + NADP(+) = 5alpha-cholesta-7,24-dien-3beta-ol + NADPH + H(+)</text>
        <dbReference type="Rhea" id="RHEA:13685"/>
        <dbReference type="ChEBI" id="CHEBI:15378"/>
        <dbReference type="ChEBI" id="CHEBI:16290"/>
        <dbReference type="ChEBI" id="CHEBI:17168"/>
        <dbReference type="ChEBI" id="CHEBI:57783"/>
        <dbReference type="ChEBI" id="CHEBI:58349"/>
        <dbReference type="EC" id="1.3.1.72"/>
    </reaction>
</comment>
<comment type="subcellular location">
    <subcellularLocation>
        <location evidence="8">Membrane</location>
        <topology evidence="8">Single-pass membrane protein</topology>
    </subcellularLocation>
</comment>
<comment type="tissue specificity">
    <text evidence="7">Highly expressed in the apical region and root tips and lower levels in immature and mature internodes and leaves.</text>
</comment>
<comment type="induction">
    <text evidence="6">Not induced by brassinolide.</text>
</comment>
<comment type="similarity">
    <text evidence="8">Belongs to the DIMINUTO family.</text>
</comment>
<accession>P93472</accession>
<accession>Q9ATR0</accession>
<keyword id="KW-0112">Calmodulin-binding</keyword>
<keyword id="KW-0472">Membrane</keyword>
<keyword id="KW-0521">NADP</keyword>
<keyword id="KW-0560">Oxidoreductase</keyword>
<keyword id="KW-0735">Signal-anchor</keyword>
<keyword id="KW-0812">Transmembrane</keyword>
<keyword id="KW-1133">Transmembrane helix</keyword>
<organism>
    <name type="scientific">Pisum sativum</name>
    <name type="common">Garden pea</name>
    <name type="synonym">Lathyrus oleraceus</name>
    <dbReference type="NCBI Taxonomy" id="3888"/>
    <lineage>
        <taxon>Eukaryota</taxon>
        <taxon>Viridiplantae</taxon>
        <taxon>Streptophyta</taxon>
        <taxon>Embryophyta</taxon>
        <taxon>Tracheophyta</taxon>
        <taxon>Spermatophyta</taxon>
        <taxon>Magnoliopsida</taxon>
        <taxon>eudicotyledons</taxon>
        <taxon>Gunneridae</taxon>
        <taxon>Pentapetalae</taxon>
        <taxon>rosids</taxon>
        <taxon>fabids</taxon>
        <taxon>Fabales</taxon>
        <taxon>Fabaceae</taxon>
        <taxon>Papilionoideae</taxon>
        <taxon>50 kb inversion clade</taxon>
        <taxon>NPAAA clade</taxon>
        <taxon>Hologalegina</taxon>
        <taxon>IRL clade</taxon>
        <taxon>Fabeae</taxon>
        <taxon>Pisum</taxon>
    </lineage>
</organism>
<dbReference type="EC" id="1.3.1.72"/>
<dbReference type="EMBL" id="D86494">
    <property type="protein sequence ID" value="BAA13096.1"/>
    <property type="molecule type" value="mRNA"/>
</dbReference>
<dbReference type="EMBL" id="AF325121">
    <property type="protein sequence ID" value="AAK15493.1"/>
    <property type="molecule type" value="mRNA"/>
</dbReference>
<dbReference type="PIR" id="T06575">
    <property type="entry name" value="T06575"/>
</dbReference>
<dbReference type="SMR" id="P93472"/>
<dbReference type="GO" id="GO:0005737">
    <property type="term" value="C:cytoplasm"/>
    <property type="evidence" value="ECO:0007669"/>
    <property type="project" value="TreeGrafter"/>
</dbReference>
<dbReference type="GO" id="GO:0016020">
    <property type="term" value="C:membrane"/>
    <property type="evidence" value="ECO:0007669"/>
    <property type="project" value="UniProtKB-SubCell"/>
</dbReference>
<dbReference type="GO" id="GO:0005516">
    <property type="term" value="F:calmodulin binding"/>
    <property type="evidence" value="ECO:0007669"/>
    <property type="project" value="UniProtKB-KW"/>
</dbReference>
<dbReference type="GO" id="GO:0050614">
    <property type="term" value="F:Delta24-sterol reductase activity"/>
    <property type="evidence" value="ECO:0007669"/>
    <property type="project" value="UniProtKB-EC"/>
</dbReference>
<dbReference type="GO" id="GO:0071949">
    <property type="term" value="F:FAD binding"/>
    <property type="evidence" value="ECO:0007669"/>
    <property type="project" value="InterPro"/>
</dbReference>
<dbReference type="GO" id="GO:0008202">
    <property type="term" value="P:steroid metabolic process"/>
    <property type="evidence" value="ECO:0007669"/>
    <property type="project" value="TreeGrafter"/>
</dbReference>
<dbReference type="FunFam" id="3.30.465.10:FF:000077">
    <property type="entry name" value="delta(24)-sterol reductase"/>
    <property type="match status" value="1"/>
</dbReference>
<dbReference type="Gene3D" id="3.30.465.10">
    <property type="match status" value="1"/>
</dbReference>
<dbReference type="InterPro" id="IPR040165">
    <property type="entry name" value="Diminuto-like"/>
</dbReference>
<dbReference type="InterPro" id="IPR016166">
    <property type="entry name" value="FAD-bd_PCMH"/>
</dbReference>
<dbReference type="InterPro" id="IPR036318">
    <property type="entry name" value="FAD-bd_PCMH-like_sf"/>
</dbReference>
<dbReference type="InterPro" id="IPR016169">
    <property type="entry name" value="FAD-bd_PCMH_sub2"/>
</dbReference>
<dbReference type="InterPro" id="IPR006094">
    <property type="entry name" value="Oxid_FAD_bind_N"/>
</dbReference>
<dbReference type="PANTHER" id="PTHR10801">
    <property type="entry name" value="24-DEHYDROCHOLESTEROL REDUCTASE"/>
    <property type="match status" value="1"/>
</dbReference>
<dbReference type="PANTHER" id="PTHR10801:SF0">
    <property type="entry name" value="DELTA(24)-STEROL REDUCTASE"/>
    <property type="match status" value="1"/>
</dbReference>
<dbReference type="Pfam" id="PF01565">
    <property type="entry name" value="FAD_binding_4"/>
    <property type="match status" value="1"/>
</dbReference>
<dbReference type="SUPFAM" id="SSF56176">
    <property type="entry name" value="FAD-binding/transporter-associated domain-like"/>
    <property type="match status" value="1"/>
</dbReference>
<dbReference type="PROSITE" id="PS51387">
    <property type="entry name" value="FAD_PCMH"/>
    <property type="match status" value="1"/>
</dbReference>
<evidence type="ECO:0000250" key="1"/>
<evidence type="ECO:0000255" key="2"/>
<evidence type="ECO:0000255" key="3">
    <source>
        <dbReference type="PROSITE-ProRule" id="PRU00718"/>
    </source>
</evidence>
<evidence type="ECO:0000256" key="4">
    <source>
        <dbReference type="SAM" id="MobiDB-lite"/>
    </source>
</evidence>
<evidence type="ECO:0000269" key="5">
    <source>
    </source>
</evidence>
<evidence type="ECO:0000269" key="6">
    <source>
    </source>
</evidence>
<evidence type="ECO:0000269" key="7">
    <source ref="1"/>
</evidence>
<evidence type="ECO:0000305" key="8"/>
<protein>
    <recommendedName>
        <fullName>Delta(24)-sterol reductase</fullName>
        <ecNumber>1.3.1.72</ecNumber>
    </recommendedName>
    <alternativeName>
        <fullName>Cell elongation protein diminuto</fullName>
    </alternativeName>
</protein>
<feature type="chain" id="PRO_0000219496" description="Delta(24)-sterol reductase">
    <location>
        <begin position="1"/>
        <end position="567"/>
    </location>
</feature>
<feature type="topological domain" description="Lumenal" evidence="2">
    <location>
        <begin position="1"/>
        <end position="24"/>
    </location>
</feature>
<feature type="transmembrane region" description="Helical; Signal-anchor" evidence="2">
    <location>
        <begin position="25"/>
        <end position="45"/>
    </location>
</feature>
<feature type="topological domain" description="Cytoplasmic" evidence="2">
    <location>
        <begin position="46"/>
        <end position="567"/>
    </location>
</feature>
<feature type="domain" description="FAD-binding PCMH-type" evidence="3">
    <location>
        <begin position="45"/>
        <end position="231"/>
    </location>
</feature>
<feature type="region of interest" description="Interaction with calmodulin" evidence="1">
    <location>
        <begin position="520"/>
        <end position="541"/>
    </location>
</feature>
<feature type="region of interest" description="Disordered" evidence="4">
    <location>
        <begin position="548"/>
        <end position="567"/>
    </location>
</feature>
<feature type="sequence variant" description="In strain: cv. Torsdag.">
    <original>S</original>
    <variation>W</variation>
    <location>
        <position position="360"/>
    </location>
</feature>
<feature type="sequence variant" description="In strain: cv. Torsdag.">
    <original>S</original>
    <variation>V</variation>
    <location>
        <position position="411"/>
    </location>
</feature>
<feature type="sequence variant" description="In strain: cv. Torsdag.">
    <original>I</original>
    <variation>V</variation>
    <location>
        <position position="417"/>
    </location>
</feature>
<feature type="sequence variant" description="In strain: cv. Torsdag.">
    <original>P</original>
    <variation>A</variation>
    <location>
        <position position="560"/>
    </location>
</feature>
<feature type="sequence variant" description="In strain: cv. Torsdag.">
    <original>P</original>
    <variation>A</variation>
    <location>
        <position position="566"/>
    </location>
</feature>
<feature type="mutagenesis site" description="In lkb; decreased activity." evidence="6">
    <original>R</original>
    <variation>K</variation>
    <location>
        <position position="24"/>
    </location>
</feature>
<sequence length="567" mass="65975">MSDLEAPLRPKRKKIWVDYFVKFRWILVIFVVLPISFTLYFLTYLGDVRSEWKSFKTRQKEHDENVQKVVNRLKKRNPSKDGLVCTARKPWVAVGMRNVDYKRARHFEVDLSPFRNILDIDKERMIARVEPLVNMGQITRVTVPMNLALAVVAELDDLTVGGLINGYGIEGSSHKYGLFSDTVVAFEIILADGSLVKATKDNEYSDLFYAIPWSQGTLGLLVAAEVKLIPIKEYMKLTYKPVVGNLKDIAQAYSDSFAPRDGDQDNDEKVPDFVETMIYSPTRAVCMTGRYASKEEAKKKGNKINNVGWWYKTWFYQHAETALKKGLFVEYIPTREYYHRHTRCLYWEGKLILPFGDQFSFRFLFGWLMPPKVSLLKATQGEAIRNYYHEMHVIQDMLVPLYKVGDALEWSDREMEIYPIWLCPHKLFKLPIKTMIYPEAGFELQRRQGDTQNAQMFTDVGVYYAPGPVLRGEVFDGAEAVRKMESWMIENHCFQPQYAVSELNEKNFWRMFDAGLYEHCRRKYGAVGTFMSVYYKCKKGRKTEKEVREAEQAHLDTAYPEVDQPPD</sequence>
<reference key="1">
    <citation type="online journal article" date="1996" name="Plant Gene Register">
        <title>A cDNA from Pisum sativum encoding the DIMINUTO homologue.</title>
        <authorList>
            <person name="Shimizu S."/>
            <person name="Mori H."/>
        </authorList>
        <locator>PGR96-079</locator>
    </citation>
    <scope>NUCLEOTIDE SEQUENCE [MRNA]</scope>
    <scope>TISSUE SPECIFICITY</scope>
    <source>
        <strain>cv. Alaska</strain>
    </source>
</reference>
<reference key="2">
    <citation type="journal article" date="2001" name="Plant Mol. Biol.">
        <title>Molecular characterization of the brassinosteroid-deficient lkb mutant in pea.</title>
        <authorList>
            <person name="Schultz L."/>
            <person name="Kerckhoffs L.H."/>
            <person name="Klahre U."/>
            <person name="Yokota T."/>
            <person name="Reid J.B."/>
        </authorList>
    </citation>
    <scope>NUCLEOTIDE SEQUENCE [MRNA]</scope>
    <scope>FUNCTION</scope>
    <scope>INDUCTION</scope>
    <scope>MUTAGENESIS OF ARG-24</scope>
    <source>
        <strain>cv. Torsdag</strain>
    </source>
</reference>
<reference key="3">
    <citation type="journal article" date="1999" name="Plant Physiol.">
        <title>Brassinosteroid/Sterol synthesis and plant growth as affected by lka and lkb mutations of Pea.</title>
        <authorList>
            <person name="Nomura T."/>
            <person name="Kitasaka Y."/>
            <person name="Takatsuto S."/>
            <person name="Reid J.B."/>
            <person name="Fukami M."/>
            <person name="Yokota T."/>
        </authorList>
    </citation>
    <scope>FUNCTION</scope>
    <scope>CATALYTIC ACTIVITY</scope>
    <source>
        <strain>cv. Torsdag</strain>
    </source>
</reference>
<proteinExistence type="evidence at protein level"/>